<name>GLSA_COREF</name>
<evidence type="ECO:0000250" key="1"/>
<evidence type="ECO:0000305" key="2"/>
<feature type="chain" id="PRO_0000110605" description="Glutaminase">
    <location>
        <begin position="1"/>
        <end position="423"/>
    </location>
</feature>
<feature type="domain" description="STAS">
    <location>
        <begin position="321"/>
        <end position="423"/>
    </location>
</feature>
<feature type="region of interest" description="Glutaminase">
    <location>
        <begin position="27"/>
        <end position="312"/>
    </location>
</feature>
<feature type="binding site" evidence="1">
    <location>
        <position position="69"/>
    </location>
    <ligand>
        <name>substrate</name>
    </ligand>
</feature>
<feature type="binding site" evidence="1">
    <location>
        <position position="119"/>
    </location>
    <ligand>
        <name>substrate</name>
    </ligand>
</feature>
<feature type="binding site" evidence="1">
    <location>
        <position position="165"/>
    </location>
    <ligand>
        <name>substrate</name>
    </ligand>
</feature>
<feature type="binding site" evidence="1">
    <location>
        <position position="172"/>
    </location>
    <ligand>
        <name>substrate</name>
    </ligand>
</feature>
<feature type="binding site" evidence="1">
    <location>
        <position position="196"/>
    </location>
    <ligand>
        <name>substrate</name>
    </ligand>
</feature>
<feature type="binding site" evidence="1">
    <location>
        <position position="248"/>
    </location>
    <ligand>
        <name>substrate</name>
    </ligand>
</feature>
<feature type="binding site" evidence="1">
    <location>
        <position position="266"/>
    </location>
    <ligand>
        <name>substrate</name>
    </ligand>
</feature>
<organism>
    <name type="scientific">Corynebacterium efficiens (strain DSM 44549 / YS-314 / AJ 12310 / JCM 11189 / NBRC 100395)</name>
    <dbReference type="NCBI Taxonomy" id="196164"/>
    <lineage>
        <taxon>Bacteria</taxon>
        <taxon>Bacillati</taxon>
        <taxon>Actinomycetota</taxon>
        <taxon>Actinomycetes</taxon>
        <taxon>Mycobacteriales</taxon>
        <taxon>Corynebacteriaceae</taxon>
        <taxon>Corynebacterium</taxon>
    </lineage>
</organism>
<reference key="1">
    <citation type="journal article" date="2003" name="Genome Res.">
        <title>Comparative complete genome sequence analysis of the amino acid replacements responsible for the thermostability of Corynebacterium efficiens.</title>
        <authorList>
            <person name="Nishio Y."/>
            <person name="Nakamura Y."/>
            <person name="Kawarabayasi Y."/>
            <person name="Usuda Y."/>
            <person name="Kimura E."/>
            <person name="Sugimoto S."/>
            <person name="Matsui K."/>
            <person name="Yamagishi A."/>
            <person name="Kikuchi H."/>
            <person name="Ikeo K."/>
            <person name="Gojobori T."/>
        </authorList>
    </citation>
    <scope>NUCLEOTIDE SEQUENCE [LARGE SCALE GENOMIC DNA]</scope>
    <source>
        <strain>DSM 44549 / YS-314 / AJ 12310 / JCM 11189 / NBRC 100395</strain>
    </source>
</reference>
<dbReference type="EC" id="3.5.1.2"/>
<dbReference type="EMBL" id="BA000035">
    <property type="protein sequence ID" value="BAC19185.1"/>
    <property type="molecule type" value="Genomic_DNA"/>
</dbReference>
<dbReference type="RefSeq" id="WP_006768381.1">
    <property type="nucleotide sequence ID" value="NC_004369.1"/>
</dbReference>
<dbReference type="SMR" id="Q8FMX4"/>
<dbReference type="STRING" id="196164.gene:10742812"/>
<dbReference type="KEGG" id="cef:CE2375"/>
<dbReference type="eggNOG" id="COG2066">
    <property type="taxonomic scope" value="Bacteria"/>
</dbReference>
<dbReference type="HOGENOM" id="CLU_027932_0_0_11"/>
<dbReference type="OrthoDB" id="9788822at2"/>
<dbReference type="Proteomes" id="UP000001409">
    <property type="component" value="Chromosome"/>
</dbReference>
<dbReference type="GO" id="GO:0004359">
    <property type="term" value="F:glutaminase activity"/>
    <property type="evidence" value="ECO:0007669"/>
    <property type="project" value="UniProtKB-UniRule"/>
</dbReference>
<dbReference type="GO" id="GO:0006537">
    <property type="term" value="P:glutamate biosynthetic process"/>
    <property type="evidence" value="ECO:0007669"/>
    <property type="project" value="TreeGrafter"/>
</dbReference>
<dbReference type="GO" id="GO:0006543">
    <property type="term" value="P:glutamine catabolic process"/>
    <property type="evidence" value="ECO:0007669"/>
    <property type="project" value="TreeGrafter"/>
</dbReference>
<dbReference type="FunFam" id="3.40.710.10:FF:000005">
    <property type="entry name" value="Glutaminase"/>
    <property type="match status" value="1"/>
</dbReference>
<dbReference type="Gene3D" id="3.40.710.10">
    <property type="entry name" value="DD-peptidase/beta-lactamase superfamily"/>
    <property type="match status" value="1"/>
</dbReference>
<dbReference type="Gene3D" id="3.30.750.24">
    <property type="entry name" value="STAS domain"/>
    <property type="match status" value="2"/>
</dbReference>
<dbReference type="HAMAP" id="MF_00313">
    <property type="entry name" value="Glutaminase"/>
    <property type="match status" value="1"/>
</dbReference>
<dbReference type="InterPro" id="IPR012338">
    <property type="entry name" value="Beta-lactam/transpept-like"/>
</dbReference>
<dbReference type="InterPro" id="IPR015868">
    <property type="entry name" value="Glutaminase"/>
</dbReference>
<dbReference type="InterPro" id="IPR002645">
    <property type="entry name" value="STAS_dom"/>
</dbReference>
<dbReference type="InterPro" id="IPR036513">
    <property type="entry name" value="STAS_dom_sf"/>
</dbReference>
<dbReference type="NCBIfam" id="TIGR03814">
    <property type="entry name" value="Gln_ase"/>
    <property type="match status" value="1"/>
</dbReference>
<dbReference type="NCBIfam" id="NF002134">
    <property type="entry name" value="PRK00971.1-4"/>
    <property type="match status" value="1"/>
</dbReference>
<dbReference type="PANTHER" id="PTHR12544">
    <property type="entry name" value="GLUTAMINASE"/>
    <property type="match status" value="1"/>
</dbReference>
<dbReference type="PANTHER" id="PTHR12544:SF29">
    <property type="entry name" value="GLUTAMINASE"/>
    <property type="match status" value="1"/>
</dbReference>
<dbReference type="Pfam" id="PF04960">
    <property type="entry name" value="Glutaminase"/>
    <property type="match status" value="1"/>
</dbReference>
<dbReference type="SUPFAM" id="SSF56601">
    <property type="entry name" value="beta-lactamase/transpeptidase-like"/>
    <property type="match status" value="1"/>
</dbReference>
<dbReference type="SUPFAM" id="SSF52091">
    <property type="entry name" value="SpoIIaa-like"/>
    <property type="match status" value="1"/>
</dbReference>
<dbReference type="PROSITE" id="PS50801">
    <property type="entry name" value="STAS"/>
    <property type="match status" value="1"/>
</dbReference>
<accession>Q8FMX4</accession>
<proteinExistence type="inferred from homology"/>
<gene>
    <name type="primary">glsA</name>
    <name type="ordered locus">CE2375</name>
</gene>
<sequence length="423" mass="45863">MTTHPLTMPIPEYFEEILESVRSDVSGEVAQYIPQLKDADPNPLALAMCTVDGHIYGAGDDEHEFTMQSVSKPFAYALALQEQGPEKVFATVGLEPSGEAFNELSLDGSTNRPMNPMINAGAIAVNQLINGSESSVEDRVEKIRSYFSALAGRELNIDRQLSETEIEGADRNLSIAHMLRNYGIIEDDAHDAVLSYTLQCSVKVTARDLAVMTATLAAGGTQPLTGEKLVDARVARLVLSTMASAGMYDEAGQWLATVGIPAKSGVSGGLVGVLPGQLGLATFSPRLNSQGNPVRGVEIFKALSEDMGLHLMSAELLTQHAVRAIEERGDTTVIQLQGAMNFSAAENFLFTVTDHDFTGEKVVLDISRVPMFRPMGRRLVKEGLRRIRDNGFKVAIYDPEDILPDFDFSDGTKSPQVDDPEEL</sequence>
<comment type="catalytic activity">
    <reaction>
        <text>L-glutamine + H2O = L-glutamate + NH4(+)</text>
        <dbReference type="Rhea" id="RHEA:15889"/>
        <dbReference type="ChEBI" id="CHEBI:15377"/>
        <dbReference type="ChEBI" id="CHEBI:28938"/>
        <dbReference type="ChEBI" id="CHEBI:29985"/>
        <dbReference type="ChEBI" id="CHEBI:58359"/>
        <dbReference type="EC" id="3.5.1.2"/>
    </reaction>
</comment>
<comment type="subunit">
    <text evidence="1">Homotetramer.</text>
</comment>
<comment type="similarity">
    <text evidence="2">Belongs to the glutaminase family.</text>
</comment>
<keyword id="KW-0378">Hydrolase</keyword>
<keyword id="KW-1185">Reference proteome</keyword>
<protein>
    <recommendedName>
        <fullName>Glutaminase</fullName>
        <ecNumber>3.5.1.2</ecNumber>
    </recommendedName>
</protein>